<comment type="function">
    <text evidence="3 4">Plays a role in mitotic spindle orientation and mitotic progression. Regulates the distribution of dynactin at the cell cortex in a PLK1-dependent manner, thus stabilizing cortical and astral microtubule attachments required for proper mitotic spindle positioning. May link microtubules to the actin cytospkeleton and focal adhesions. May be required for directed cell migration and centrosome orientation. May also be necessary for proper stacking of the Golgi apparatus.</text>
</comment>
<comment type="subunit">
    <text evidence="3 4">Associates with F-actin. Interacts with DCTN1; this interaction regulates DCTN1 distribution at the cell cortex. Interacts with PTK2/FAK and MAPRE1.</text>
</comment>
<comment type="interaction">
    <interactant intactId="EBI-2555085">
        <id>Q8IVT2</id>
    </interactant>
    <interactant intactId="EBI-11976299">
        <id>Q5BKX5-3</id>
        <label>ACTMAP</label>
    </interactant>
    <organismsDiffer>false</organismsDiffer>
    <experiments>3</experiments>
</comment>
<comment type="interaction">
    <interactant intactId="EBI-2555085">
        <id>Q8IVT2</id>
    </interactant>
    <interactant intactId="EBI-2548012">
        <id>Q9H2G9</id>
        <label>BLZF1</label>
    </interactant>
    <organismsDiffer>false</organismsDiffer>
    <experiments>5</experiments>
</comment>
<comment type="interaction">
    <interactant intactId="EBI-2555085">
        <id>Q8IVT2</id>
    </interactant>
    <interactant intactId="EBI-11983447">
        <id>Q8N9W6-4</id>
        <label>BOLL</label>
    </interactant>
    <organismsDiffer>false</organismsDiffer>
    <experiments>3</experiments>
</comment>
<comment type="interaction">
    <interactant intactId="EBI-2555085">
        <id>Q8IVT2</id>
    </interactant>
    <interactant intactId="EBI-2802782">
        <id>Q6NVV7</id>
        <label>CDPF1</label>
    </interactant>
    <organismsDiffer>false</organismsDiffer>
    <experiments>3</experiments>
</comment>
<comment type="interaction">
    <interactant intactId="EBI-2555085">
        <id>Q8IVT2</id>
    </interactant>
    <interactant intactId="EBI-742887">
        <id>Q8TAP6</id>
        <label>CEP76</label>
    </interactant>
    <organismsDiffer>false</organismsDiffer>
    <experiments>3</experiments>
</comment>
<comment type="interaction">
    <interactant intactId="EBI-2555085">
        <id>Q8IVT2</id>
    </interactant>
    <interactant intactId="EBI-2510250">
        <id>Q96SW2</id>
        <label>CRBN</label>
    </interactant>
    <organismsDiffer>false</organismsDiffer>
    <experiments>3</experiments>
</comment>
<comment type="interaction">
    <interactant intactId="EBI-2555085">
        <id>Q8IVT2</id>
    </interactant>
    <interactant intactId="EBI-10237931">
        <id>Q9BQC3</id>
        <label>DPH2</label>
    </interactant>
    <organismsDiffer>false</organismsDiffer>
    <experiments>3</experiments>
</comment>
<comment type="interaction">
    <interactant intactId="EBI-2555085">
        <id>Q8IVT2</id>
    </interactant>
    <interactant intactId="EBI-710457">
        <id>Q7L190</id>
        <label>DPPA4</label>
    </interactant>
    <organismsDiffer>false</organismsDiffer>
    <experiments>3</experiments>
</comment>
<comment type="interaction">
    <interactant intactId="EBI-2555085">
        <id>Q8IVT2</id>
    </interactant>
    <interactant intactId="EBI-2349927">
        <id>Q5JST6</id>
        <label>EFHC2</label>
    </interactant>
    <organismsDiffer>false</organismsDiffer>
    <experiments>3</experiments>
</comment>
<comment type="interaction">
    <interactant intactId="EBI-2555085">
        <id>Q8IVT2</id>
    </interactant>
    <interactant intactId="EBI-744099">
        <id>Q9H0I2</id>
        <label>ENKD1</label>
    </interactant>
    <organismsDiffer>false</organismsDiffer>
    <experiments>3</experiments>
</comment>
<comment type="interaction">
    <interactant intactId="EBI-2555085">
        <id>Q8IVT2</id>
    </interactant>
    <interactant intactId="EBI-1056902">
        <id>P15311</id>
        <label>EZR</label>
    </interactant>
    <organismsDiffer>false</organismsDiffer>
    <experiments>6</experiments>
</comment>
<comment type="interaction">
    <interactant intactId="EBI-2555085">
        <id>Q8IVT2</id>
    </interactant>
    <interactant intactId="EBI-701903">
        <id>Q14192</id>
        <label>FHL2</label>
    </interactant>
    <organismsDiffer>false</organismsDiffer>
    <experiments>3</experiments>
</comment>
<comment type="interaction">
    <interactant intactId="EBI-2555085">
        <id>Q8IVT2</id>
    </interactant>
    <interactant intactId="EBI-750641">
        <id>Q5TD97</id>
        <label>FHL5</label>
    </interactant>
    <organismsDiffer>false</organismsDiffer>
    <experiments>3</experiments>
</comment>
<comment type="interaction">
    <interactant intactId="EBI-2555085">
        <id>Q8IVT2</id>
    </interactant>
    <interactant intactId="EBI-618309">
        <id>Q08379</id>
        <label>GOLGA2</label>
    </interactant>
    <organismsDiffer>false</organismsDiffer>
    <experiments>3</experiments>
</comment>
<comment type="interaction">
    <interactant intactId="EBI-2555085">
        <id>Q8IVT2</id>
    </interactant>
    <interactant intactId="EBI-11519926">
        <id>Q6PI77</id>
        <label>GPRASP3</label>
    </interactant>
    <organismsDiffer>false</organismsDiffer>
    <experiments>3</experiments>
</comment>
<comment type="interaction">
    <interactant intactId="EBI-2555085">
        <id>Q8IVT2</id>
    </interactant>
    <interactant intactId="EBI-7060731">
        <id>P61978-2</id>
        <label>HNRNPK</label>
    </interactant>
    <organismsDiffer>false</organismsDiffer>
    <experiments>3</experiments>
</comment>
<comment type="interaction">
    <interactant intactId="EBI-2555085">
        <id>Q8IVT2</id>
    </interactant>
    <interactant intactId="EBI-7116203">
        <id>O75031</id>
        <label>HSF2BP</label>
    </interactant>
    <organismsDiffer>false</organismsDiffer>
    <experiments>3</experiments>
</comment>
<comment type="interaction">
    <interactant intactId="EBI-2555085">
        <id>Q8IVT2</id>
    </interactant>
    <interactant intactId="EBI-739395">
        <id>Q16082</id>
        <label>HSPB2</label>
    </interactant>
    <organismsDiffer>false</organismsDiffer>
    <experiments>3</experiments>
</comment>
<comment type="interaction">
    <interactant intactId="EBI-2555085">
        <id>Q8IVT2</id>
    </interactant>
    <interactant intactId="EBI-739074">
        <id>Q9UJY1</id>
        <label>HSPB8</label>
    </interactant>
    <organismsDiffer>false</organismsDiffer>
    <experiments>3</experiments>
</comment>
<comment type="interaction">
    <interactant intactId="EBI-2555085">
        <id>Q8IVT2</id>
    </interactant>
    <interactant intactId="EBI-747204">
        <id>Q9UKT9</id>
        <label>IKZF3</label>
    </interactant>
    <organismsDiffer>false</organismsDiffer>
    <experiments>5</experiments>
</comment>
<comment type="interaction">
    <interactant intactId="EBI-2555085">
        <id>Q8IVT2</id>
    </interactant>
    <interactant intactId="EBI-9658404">
        <id>Q5VVH5</id>
        <label>IRAK1BP1</label>
    </interactant>
    <organismsDiffer>false</organismsDiffer>
    <experiments>3</experiments>
</comment>
<comment type="interaction">
    <interactant intactId="EBI-2555085">
        <id>Q8IVT2</id>
    </interactant>
    <interactant intactId="EBI-11953334">
        <id>P60328</id>
        <label>KRTAP12-3</label>
    </interactant>
    <organismsDiffer>false</organismsDiffer>
    <experiments>3</experiments>
</comment>
<comment type="interaction">
    <interactant intactId="EBI-2555085">
        <id>Q8IVT2</id>
    </interactant>
    <interactant intactId="EBI-8639312">
        <id>P25800</id>
        <label>LMO1</label>
    </interactant>
    <organismsDiffer>false</organismsDiffer>
    <experiments>8</experiments>
</comment>
<comment type="interaction">
    <interactant intactId="EBI-2555085">
        <id>Q8IVT2</id>
    </interactant>
    <interactant intactId="EBI-11959475">
        <id>P25791-3</id>
        <label>LMO2</label>
    </interactant>
    <organismsDiffer>false</organismsDiffer>
    <experiments>5</experiments>
</comment>
<comment type="interaction">
    <interactant intactId="EBI-2555085">
        <id>Q8IVT2</id>
    </interactant>
    <interactant intactId="EBI-2603996">
        <id>Q9BXW4</id>
        <label>MAP1LC3C</label>
    </interactant>
    <organismsDiffer>false</organismsDiffer>
    <experiments>3</experiments>
</comment>
<comment type="interaction">
    <interactant intactId="EBI-2555085">
        <id>Q8IVT2</id>
    </interactant>
    <interactant intactId="EBI-9675802">
        <id>Q6PF18</id>
        <label>MORN3</label>
    </interactant>
    <organismsDiffer>false</organismsDiffer>
    <experiments>3</experiments>
</comment>
<comment type="interaction">
    <interactant intactId="EBI-2555085">
        <id>Q8IVT2</id>
    </interactant>
    <interactant intactId="EBI-12835568">
        <id>Q5VZ52</id>
        <label>MORN5</label>
    </interactant>
    <organismsDiffer>false</organismsDiffer>
    <experiments>3</experiments>
</comment>
<comment type="interaction">
    <interactant intactId="EBI-2555085">
        <id>Q8IVT2</id>
    </interactant>
    <interactant intactId="EBI-536879">
        <id>O43482</id>
        <label>OIP5</label>
    </interactant>
    <organismsDiffer>false</organismsDiffer>
    <experiments>3</experiments>
</comment>
<comment type="interaction">
    <interactant intactId="EBI-2555085">
        <id>Q8IVT2</id>
    </interactant>
    <interactant intactId="EBI-747278">
        <id>P26367</id>
        <label>PAX6</label>
    </interactant>
    <organismsDiffer>false</organismsDiffer>
    <experiments>3</experiments>
</comment>
<comment type="interaction">
    <interactant intactId="EBI-2555085">
        <id>Q8IVT2</id>
    </interactant>
    <interactant intactId="EBI-357275">
        <id>Q99471</id>
        <label>PFDN5</label>
    </interactant>
    <organismsDiffer>false</organismsDiffer>
    <experiments>3</experiments>
</comment>
<comment type="interaction">
    <interactant intactId="EBI-2555085">
        <id>Q8IVT2</id>
    </interactant>
    <interactant intactId="EBI-357318">
        <id>Q9NWS0</id>
        <label>PIH1D1</label>
    </interactant>
    <organismsDiffer>false</organismsDiffer>
    <experiments>3</experiments>
</comment>
<comment type="interaction">
    <interactant intactId="EBI-2555085">
        <id>Q8IVT2</id>
    </interactant>
    <interactant intactId="EBI-10232538">
        <id>Q8WWB5</id>
        <label>PIH1D2</label>
    </interactant>
    <organismsDiffer>false</organismsDiffer>
    <experiments>3</experiments>
</comment>
<comment type="interaction">
    <interactant intactId="EBI-2555085">
        <id>Q8IVT2</id>
    </interactant>
    <interactant intactId="EBI-302355">
        <id>Q9UL42</id>
        <label>PNMA2</label>
    </interactant>
    <organismsDiffer>false</organismsDiffer>
    <experiments>3</experiments>
</comment>
<comment type="interaction">
    <interactant intactId="EBI-2555085">
        <id>Q8IVT2</id>
    </interactant>
    <interactant intactId="EBI-10293968">
        <id>Q96T49</id>
        <label>PPP1R16B</label>
    </interactant>
    <organismsDiffer>false</organismsDiffer>
    <experiments>3</experiments>
</comment>
<comment type="interaction">
    <interactant intactId="EBI-2555085">
        <id>Q8IVT2</id>
    </interactant>
    <interactant intactId="EBI-1567866">
        <id>Q6MZQ0</id>
        <label>PRR5L</label>
    </interactant>
    <organismsDiffer>false</organismsDiffer>
    <experiments>3</experiments>
</comment>
<comment type="interaction">
    <interactant intactId="EBI-2555085">
        <id>Q8IVT2</id>
    </interactant>
    <interactant intactId="EBI-10265323">
        <id>Q8N443</id>
        <label>RIBC1</label>
    </interactant>
    <organismsDiffer>false</organismsDiffer>
    <experiments>3</experiments>
</comment>
<comment type="interaction">
    <interactant intactId="EBI-2555085">
        <id>Q8IVT2</id>
    </interactant>
    <interactant intactId="EBI-726876">
        <id>Q6NUQ1</id>
        <label>RINT1</label>
    </interactant>
    <organismsDiffer>false</organismsDiffer>
    <experiments>3</experiments>
</comment>
<comment type="interaction">
    <interactant intactId="EBI-2555085">
        <id>Q8IVT2</id>
    </interactant>
    <interactant intactId="EBI-6257312">
        <id>Q9BVN2</id>
        <label>RUSC1</label>
    </interactant>
    <organismsDiffer>false</organismsDiffer>
    <experiments>3</experiments>
</comment>
<comment type="interaction">
    <interactant intactId="EBI-2555085">
        <id>Q8IVT2</id>
    </interactant>
    <interactant intactId="EBI-2462271">
        <id>Q15428</id>
        <label>SF3A2</label>
    </interactant>
    <organismsDiffer>false</organismsDiffer>
    <experiments>3</experiments>
</comment>
<comment type="interaction">
    <interactant intactId="EBI-2555085">
        <id>Q8IVT2</id>
    </interactant>
    <interactant intactId="EBI-632715">
        <id>Q13573</id>
        <label>SNW1</label>
    </interactant>
    <organismsDiffer>false</organismsDiffer>
    <experiments>3</experiments>
</comment>
<comment type="interaction">
    <interactant intactId="EBI-2555085">
        <id>Q8IVT2</id>
    </interactant>
    <interactant intactId="EBI-1539606">
        <id>O14512</id>
        <label>SOCS7</label>
    </interactant>
    <organismsDiffer>false</organismsDiffer>
    <experiments>3</experiments>
</comment>
<comment type="interaction">
    <interactant intactId="EBI-2555085">
        <id>Q8IVT2</id>
    </interactant>
    <interactant intactId="EBI-11995806">
        <id>Q9H0A9-2</id>
        <label>SPATC1L</label>
    </interactant>
    <organismsDiffer>false</organismsDiffer>
    <experiments>3</experiments>
</comment>
<comment type="interaction">
    <interactant intactId="EBI-2555085">
        <id>Q8IVT2</id>
    </interactant>
    <interactant intactId="EBI-3923692">
        <id>Q496A3</id>
        <label>SPATS1</label>
    </interactant>
    <organismsDiffer>false</organismsDiffer>
    <experiments>3</experiments>
</comment>
<comment type="interaction">
    <interactant intactId="EBI-2555085">
        <id>Q8IVT2</id>
    </interactant>
    <interactant intactId="EBI-711018">
        <id>P54274-2</id>
        <label>TERF1</label>
    </interactant>
    <organismsDiffer>false</organismsDiffer>
    <experiments>5</experiments>
</comment>
<comment type="interaction">
    <interactant intactId="EBI-2555085">
        <id>Q8IVT2</id>
    </interactant>
    <interactant intactId="EBI-355744">
        <id>Q12933</id>
        <label>TRAF2</label>
    </interactant>
    <organismsDiffer>false</organismsDiffer>
    <experiments>3</experiments>
</comment>
<comment type="interaction">
    <interactant intactId="EBI-2555085">
        <id>Q8IVT2</id>
    </interactant>
    <interactant intactId="EBI-492476">
        <id>Q96RU7</id>
        <label>TRIB3</label>
    </interactant>
    <organismsDiffer>false</organismsDiffer>
    <experiments>3</experiments>
</comment>
<comment type="interaction">
    <interactant intactId="EBI-2555085">
        <id>Q8IVT2</id>
    </interactant>
    <interactant intactId="EBI-742327">
        <id>Q15654</id>
        <label>TRIP6</label>
    </interactant>
    <organismsDiffer>false</organismsDiffer>
    <experiments>3</experiments>
</comment>
<comment type="interaction">
    <interactant intactId="EBI-2555085">
        <id>Q8IVT2</id>
    </interactant>
    <interactant intactId="EBI-357430">
        <id>P61758</id>
        <label>VBP1</label>
    </interactant>
    <organismsDiffer>false</organismsDiffer>
    <experiments>3</experiments>
</comment>
<comment type="interaction">
    <interactant intactId="EBI-2555085">
        <id>Q8IVT2</id>
    </interactant>
    <interactant intactId="EBI-4395669">
        <id>Q6ZNG0</id>
        <label>ZNF620</label>
    </interactant>
    <organismsDiffer>false</organismsDiffer>
    <experiments>3</experiments>
</comment>
<comment type="interaction">
    <interactant intactId="EBI-2555085">
        <id>Q8IVT2</id>
    </interactant>
    <interactant intactId="EBI-10251462">
        <id>Q6NX45</id>
        <label>ZNF774</label>
    </interactant>
    <organismsDiffer>false</organismsDiffer>
    <experiments>3</experiments>
</comment>
<comment type="subcellular location">
    <subcellularLocation>
        <location>Cell junction</location>
        <location>Focal adhesion</location>
    </subcellularLocation>
    <subcellularLocation>
        <location>Cytoplasm</location>
        <location>Cytoskeleton</location>
    </subcellularLocation>
    <subcellularLocation>
        <location>Cytoplasm</location>
        <location>Cell cortex</location>
    </subcellularLocation>
    <text>Predominantly localizes to cortical actin structures during interphase and mitosis. Present in retraction fibers, which are formed at former adhesion sites during mitosis, and at spicular membrane protrusions in re-attaching cytokinetic cells. Partially colocalizes with cytoplasmic F-actin. Not detected at microtubules at interphase, nor at spindle during mitosis.</text>
</comment>
<comment type="developmental stage">
    <text evidence="3">Regulated in a cell-cycle dependent manner. Weakly expressed in G1 and S phases. Expression increases in G2/M phases and persisting until the end of mitosis (at protein level).</text>
</comment>
<comment type="PTM">
    <text evidence="3 4">Phosphorylated by CDK1 and PLK1. CDK1 is the priming kinase for PLK1 phosphorylation. Phosphorylation by PLK1 is required for proper spindle orientation at metaphase.</text>
</comment>
<comment type="similarity">
    <text evidence="6">Belongs to the MISP family.</text>
</comment>
<proteinExistence type="evidence at protein level"/>
<evidence type="ECO:0000255" key="1"/>
<evidence type="ECO:0000256" key="2">
    <source>
        <dbReference type="SAM" id="MobiDB-lite"/>
    </source>
</evidence>
<evidence type="ECO:0000269" key="3">
    <source>
    </source>
</evidence>
<evidence type="ECO:0000269" key="4">
    <source>
    </source>
</evidence>
<evidence type="ECO:0000303" key="5">
    <source>
    </source>
</evidence>
<evidence type="ECO:0000305" key="6"/>
<evidence type="ECO:0000312" key="7">
    <source>
        <dbReference type="HGNC" id="HGNC:27000"/>
    </source>
</evidence>
<evidence type="ECO:0007744" key="8">
    <source>
    </source>
</evidence>
<evidence type="ECO:0007744" key="9">
    <source>
    </source>
</evidence>
<evidence type="ECO:0007744" key="10">
    <source>
    </source>
</evidence>
<evidence type="ECO:0007744" key="11">
    <source>
    </source>
</evidence>
<evidence type="ECO:0007744" key="12">
    <source>
    </source>
</evidence>
<sequence>MDRVTRYPILGIPQAHRGTGLVLDGDTSYTYHLVCMGPEASGWGQDEPQTWPTDHRAQQGVQRQGVSYSVHAYTGQPSPRGLHSENREDEGWQVYRLGARDAHQGRPTWALRPEDGEDKEMKTYRLDAGDADPRRLCDLERERWAVIQGQAVRKSSTVATLQGTPDHGDPRTPGPPRSTPLEENVVDREQIDFLAARQQFLSLEQANKGAPHSSPARGTPAGTTPGASQAPKAFNKPHLANGHVVPIKPQVKGVVREENKVRAVPTWASVQVVDDPGSLASVESPGTPKETPIEREIRLAQEREADLREQRGLRQATDHQELVEIPTRPLLTKLSLITAPRRERGRPSLYVQRDIVQETQREEDHRREGLHVGRASTPDWVSEGPQPGLRRALSSDSILSPAPDARAADPAPEVRKVNRIPPDAYQPYLSPGTPQLEFSAFGAFGKPSSLSTAEAKAATSPKATMSPRHLSESSGKPLSTKQEASKPPRGCPQANRGVVRWEYFRLRPLRFRAPDEPQQAQVPHVWGWEVAGAPALRLQKSQSSDLLERERESVLRREQEVAEERRNALFPEVFSPTPDENSDQNSRSSSQASGITGSYSVSESPFFSPIHLHSNVAWTVEDPVDSAPPGQRKKEQWYAGINPSDGINSEVLEAIRVTRHKNAMAERWESRIYASEEDD</sequence>
<protein>
    <recommendedName>
        <fullName evidence="5">Mitotic interactor and substrate of PLK1</fullName>
    </recommendedName>
    <alternativeName>
        <fullName evidence="7">Mitotic spindle positioning protein</fullName>
    </alternativeName>
</protein>
<reference key="1">
    <citation type="journal article" date="2004" name="Genome Res.">
        <title>The status, quality, and expansion of the NIH full-length cDNA project: the Mammalian Gene Collection (MGC).</title>
        <authorList>
            <consortium name="The MGC Project Team"/>
        </authorList>
    </citation>
    <scope>NUCLEOTIDE SEQUENCE [LARGE SCALE MRNA]</scope>
    <source>
        <tissue>Brain</tissue>
        <tissue>Colon</tissue>
    </source>
</reference>
<reference key="2">
    <citation type="journal article" date="2006" name="Cell">
        <title>Global, in vivo, and site-specific phosphorylation dynamics in signaling networks.</title>
        <authorList>
            <person name="Olsen J.V."/>
            <person name="Blagoev B."/>
            <person name="Gnad F."/>
            <person name="Macek B."/>
            <person name="Kumar C."/>
            <person name="Mortensen P."/>
            <person name="Mann M."/>
        </authorList>
    </citation>
    <scope>IDENTIFICATION BY MASS SPECTROMETRY [LARGE SCALE ANALYSIS]</scope>
    <source>
        <tissue>Cervix carcinoma</tissue>
    </source>
</reference>
<reference key="3">
    <citation type="journal article" date="2008" name="J. Proteome Res.">
        <title>Combining protein-based IMAC, peptide-based IMAC, and MudPIT for efficient phosphoproteomic analysis.</title>
        <authorList>
            <person name="Cantin G.T."/>
            <person name="Yi W."/>
            <person name="Lu B."/>
            <person name="Park S.K."/>
            <person name="Xu T."/>
            <person name="Lee J.-D."/>
            <person name="Yates J.R. III"/>
        </authorList>
    </citation>
    <scope>PHOSPHORYLATION [LARGE SCALE ANALYSIS] AT THR-164</scope>
    <scope>IDENTIFICATION BY MASS SPECTROMETRY [LARGE SCALE ANALYSIS]</scope>
    <source>
        <tissue>Cervix carcinoma</tissue>
    </source>
</reference>
<reference key="4">
    <citation type="journal article" date="2008" name="Mol. Cell">
        <title>Kinase-selective enrichment enables quantitative phosphoproteomics of the kinome across the cell cycle.</title>
        <authorList>
            <person name="Daub H."/>
            <person name="Olsen J.V."/>
            <person name="Bairlein M."/>
            <person name="Gnad F."/>
            <person name="Oppermann F.S."/>
            <person name="Korner R."/>
            <person name="Greff Z."/>
            <person name="Keri G."/>
            <person name="Stemmann O."/>
            <person name="Mann M."/>
        </authorList>
    </citation>
    <scope>PHOSPHORYLATION [LARGE SCALE ANALYSIS] AT SER-284; THR-287 AND SER-400</scope>
    <scope>IDENTIFICATION BY MASS SPECTROMETRY [LARGE SCALE ANALYSIS]</scope>
    <source>
        <tissue>Cervix carcinoma</tissue>
    </source>
</reference>
<reference key="5">
    <citation type="journal article" date="2008" name="Proc. Natl. Acad. Sci. U.S.A.">
        <title>A quantitative atlas of mitotic phosphorylation.</title>
        <authorList>
            <person name="Dephoure N."/>
            <person name="Zhou C."/>
            <person name="Villen J."/>
            <person name="Beausoleil S.A."/>
            <person name="Bakalarski C.E."/>
            <person name="Elledge S.J."/>
            <person name="Gygi S.P."/>
        </authorList>
    </citation>
    <scope>PHOSPHORYLATION [LARGE SCALE ANALYSIS] AT THR-164; THR-172; THR-219; THR-224; SER-284; THR-287; SER-394; SER-395; SER-397; SER-400; SER-430; SER-541; SER-543; SER-575; THR-577; SER-582 AND SER-675</scope>
    <scope>IDENTIFICATION BY MASS SPECTROMETRY [LARGE SCALE ANALYSIS]</scope>
    <source>
        <tissue>Cervix carcinoma</tissue>
    </source>
</reference>
<reference key="6">
    <citation type="journal article" date="2010" name="Sci. Signal.">
        <title>Quantitative phosphoproteomics reveals widespread full phosphorylation site occupancy during mitosis.</title>
        <authorList>
            <person name="Olsen J.V."/>
            <person name="Vermeulen M."/>
            <person name="Santamaria A."/>
            <person name="Kumar C."/>
            <person name="Miller M.L."/>
            <person name="Jensen L.J."/>
            <person name="Gnad F."/>
            <person name="Cox J."/>
            <person name="Jensen T.S."/>
            <person name="Nigg E.A."/>
            <person name="Brunak S."/>
            <person name="Mann M."/>
        </authorList>
    </citation>
    <scope>PHOSPHORYLATION [LARGE SCALE ANALYSIS] AT SER-78; THR-164; SER-214; THR-219; THR-287; THR-377; SER-394; SER-395; SER-400; SER-471; SER-541; SER-575; THR-577 AND SER-582</scope>
    <scope>IDENTIFICATION BY MASS SPECTROMETRY [LARGE SCALE ANALYSIS]</scope>
    <source>
        <tissue>Cervix carcinoma</tissue>
    </source>
</reference>
<reference key="7">
    <citation type="journal article" date="2013" name="Cell Cycle">
        <title>The novel actin/focal adhesion-associated protein MISP is involved in mitotic spindle positioning in human cells.</title>
        <authorList>
            <person name="Maier B."/>
            <person name="Kirsch M."/>
            <person name="Anderhub S."/>
            <person name="Zentgraf H."/>
            <person name="Kraemer A."/>
        </authorList>
    </citation>
    <scope>FUNCTION</scope>
    <scope>INTERACTION WITH DCTN1; MAPRE1 AND PTK2</scope>
    <scope>SUBCELLULAR LOCATION</scope>
    <scope>PHOSPHORYLATION BY CDK1</scope>
</reference>
<reference key="8">
    <citation type="journal article" date="2013" name="J. Cell Biol.">
        <title>MISP is a novel Plk1 substrate required for proper spindle orientation and mitotic progression.</title>
        <authorList>
            <person name="Zhu M."/>
            <person name="Settele F."/>
            <person name="Kotak S."/>
            <person name="Sanchez-Pulido L."/>
            <person name="Ehret L."/>
            <person name="Ponting C.P."/>
            <person name="Goenczy P."/>
            <person name="Hoffmann I."/>
        </authorList>
    </citation>
    <scope>FUNCTION</scope>
    <scope>INTERACTION WITH ACTIN AND DCTN1</scope>
    <scope>SUBCELLULAR LOCATION</scope>
    <scope>DEVELOPMENTAL STAGE</scope>
    <scope>PHOSPHORYLATION AT SER-78; THR-164; THR-172; SER-214; THR-224; SER-284; THR-287; THR-377; SER-382; SER-394; SER-395; SER-397; SER-575; SER-582 AND SER-586</scope>
    <scope>MUTAGENESIS OF SER-78; THR-164; THR-172; SER-214; THR-224; SER-284; THR-287; THR-377; SER-382; SER-394; SER-395; SER-397; SER-471; SER-575; SER-582 AND SER-586</scope>
</reference>
<reference key="9">
    <citation type="journal article" date="2013" name="J. Proteome Res.">
        <title>Toward a comprehensive characterization of a human cancer cell phosphoproteome.</title>
        <authorList>
            <person name="Zhou H."/>
            <person name="Di Palma S."/>
            <person name="Preisinger C."/>
            <person name="Peng M."/>
            <person name="Polat A.N."/>
            <person name="Heck A.J."/>
            <person name="Mohammed S."/>
        </authorList>
    </citation>
    <scope>PHOSPHORYLATION [LARGE SCALE ANALYSIS] AT SER-78; SER-156; THR-164; THR-179; THR-224; SER-348; SER-394; SER-395; SER-397; SER-400; SER-471; SER-541; SER-543 AND SER-575</scope>
    <scope>IDENTIFICATION BY MASS SPECTROMETRY [LARGE SCALE ANALYSIS]</scope>
    <source>
        <tissue>Cervix carcinoma</tissue>
    </source>
</reference>
<dbReference type="EMBL" id="BC042125">
    <property type="protein sequence ID" value="AAH42125.1"/>
    <property type="molecule type" value="mRNA"/>
</dbReference>
<dbReference type="EMBL" id="BC052236">
    <property type="protein sequence ID" value="AAH52236.1"/>
    <property type="molecule type" value="mRNA"/>
</dbReference>
<dbReference type="CCDS" id="CCDS12042.1"/>
<dbReference type="PIR" id="T00636">
    <property type="entry name" value="T00636"/>
</dbReference>
<dbReference type="RefSeq" id="NP_775752.1">
    <property type="nucleotide sequence ID" value="NM_173481.4"/>
</dbReference>
<dbReference type="RefSeq" id="XP_011525987.1">
    <property type="nucleotide sequence ID" value="XM_011527685.3"/>
</dbReference>
<dbReference type="RefSeq" id="XP_011525988.1">
    <property type="nucleotide sequence ID" value="XM_011527686.3"/>
</dbReference>
<dbReference type="RefSeq" id="XP_054175780.1">
    <property type="nucleotide sequence ID" value="XM_054319805.1"/>
</dbReference>
<dbReference type="RefSeq" id="XP_054175781.1">
    <property type="nucleotide sequence ID" value="XM_054319806.1"/>
</dbReference>
<dbReference type="SMR" id="Q8IVT2"/>
<dbReference type="BioGRID" id="125982">
    <property type="interactions" value="206"/>
</dbReference>
<dbReference type="FunCoup" id="Q8IVT2">
    <property type="interactions" value="470"/>
</dbReference>
<dbReference type="IntAct" id="Q8IVT2">
    <property type="interactions" value="152"/>
</dbReference>
<dbReference type="MINT" id="Q8IVT2"/>
<dbReference type="STRING" id="9606.ENSP00000215582"/>
<dbReference type="ChEMBL" id="CHEMBL4295893"/>
<dbReference type="GlyCosmos" id="Q8IVT2">
    <property type="glycosylation" value="1 site, 1 glycan"/>
</dbReference>
<dbReference type="GlyGen" id="Q8IVT2">
    <property type="glycosylation" value="5 sites, 1 O-linked glycan (3 sites)"/>
</dbReference>
<dbReference type="iPTMnet" id="Q8IVT2"/>
<dbReference type="PhosphoSitePlus" id="Q8IVT2"/>
<dbReference type="SwissPalm" id="Q8IVT2"/>
<dbReference type="BioMuta" id="MISP"/>
<dbReference type="DMDM" id="73620663"/>
<dbReference type="jPOST" id="Q8IVT2"/>
<dbReference type="MassIVE" id="Q8IVT2"/>
<dbReference type="PaxDb" id="9606-ENSP00000215582"/>
<dbReference type="PeptideAtlas" id="Q8IVT2"/>
<dbReference type="ProteomicsDB" id="70765"/>
<dbReference type="Pumba" id="Q8IVT2"/>
<dbReference type="Antibodypedia" id="22380">
    <property type="antibodies" value="116 antibodies from 21 providers"/>
</dbReference>
<dbReference type="DNASU" id="126353"/>
<dbReference type="Ensembl" id="ENST00000215582.8">
    <property type="protein sequence ID" value="ENSP00000215582.4"/>
    <property type="gene ID" value="ENSG00000099812.9"/>
</dbReference>
<dbReference type="GeneID" id="126353"/>
<dbReference type="KEGG" id="hsa:126353"/>
<dbReference type="MANE-Select" id="ENST00000215582.8">
    <property type="protein sequence ID" value="ENSP00000215582.4"/>
    <property type="RefSeq nucleotide sequence ID" value="NM_173481.4"/>
    <property type="RefSeq protein sequence ID" value="NP_775752.1"/>
</dbReference>
<dbReference type="UCSC" id="uc002lpo.4">
    <property type="organism name" value="human"/>
</dbReference>
<dbReference type="AGR" id="HGNC:27000"/>
<dbReference type="CTD" id="126353"/>
<dbReference type="DisGeNET" id="126353"/>
<dbReference type="GeneCards" id="MISP"/>
<dbReference type="HGNC" id="HGNC:27000">
    <property type="gene designation" value="MISP"/>
</dbReference>
<dbReference type="HPA" id="ENSG00000099812">
    <property type="expression patterns" value="Tissue enriched (intestine)"/>
</dbReference>
<dbReference type="MIM" id="615289">
    <property type="type" value="gene"/>
</dbReference>
<dbReference type="neXtProt" id="NX_Q8IVT2"/>
<dbReference type="OpenTargets" id="ENSG00000099812"/>
<dbReference type="PharmGKB" id="PA134861073"/>
<dbReference type="VEuPathDB" id="HostDB:ENSG00000099812"/>
<dbReference type="eggNOG" id="ENOG502RZZI">
    <property type="taxonomic scope" value="Eukaryota"/>
</dbReference>
<dbReference type="GeneTree" id="ENSGT00940000154739"/>
<dbReference type="HOGENOM" id="CLU_404873_0_0_1"/>
<dbReference type="InParanoid" id="Q8IVT2"/>
<dbReference type="OMA" id="QASHRHD"/>
<dbReference type="OrthoDB" id="9449914at2759"/>
<dbReference type="PAN-GO" id="Q8IVT2">
    <property type="GO annotations" value="0 GO annotations based on evolutionary models"/>
</dbReference>
<dbReference type="PhylomeDB" id="Q8IVT2"/>
<dbReference type="TreeFam" id="TF334067"/>
<dbReference type="PathwayCommons" id="Q8IVT2"/>
<dbReference type="SignaLink" id="Q8IVT2"/>
<dbReference type="BioGRID-ORCS" id="126353">
    <property type="hits" value="10 hits in 1109 CRISPR screens"/>
</dbReference>
<dbReference type="ChiTaRS" id="MISP">
    <property type="organism name" value="human"/>
</dbReference>
<dbReference type="GenomeRNAi" id="126353"/>
<dbReference type="Pharos" id="Q8IVT2">
    <property type="development level" value="Tbio"/>
</dbReference>
<dbReference type="PRO" id="PR:Q8IVT2"/>
<dbReference type="Proteomes" id="UP000005640">
    <property type="component" value="Chromosome 19"/>
</dbReference>
<dbReference type="RNAct" id="Q8IVT2">
    <property type="molecule type" value="protein"/>
</dbReference>
<dbReference type="Bgee" id="ENSG00000099812">
    <property type="expression patterns" value="Expressed in ileal mucosa and 132 other cell types or tissues"/>
</dbReference>
<dbReference type="GO" id="GO:0005884">
    <property type="term" value="C:actin filament"/>
    <property type="evidence" value="ECO:0000315"/>
    <property type="project" value="UniProtKB"/>
</dbReference>
<dbReference type="GO" id="GO:0005938">
    <property type="term" value="C:cell cortex"/>
    <property type="evidence" value="ECO:0007669"/>
    <property type="project" value="UniProtKB-SubCell"/>
</dbReference>
<dbReference type="GO" id="GO:0005925">
    <property type="term" value="C:focal adhesion"/>
    <property type="evidence" value="ECO:0000314"/>
    <property type="project" value="HPA"/>
</dbReference>
<dbReference type="GO" id="GO:0043231">
    <property type="term" value="C:intracellular membrane-bounded organelle"/>
    <property type="evidence" value="ECO:0000314"/>
    <property type="project" value="HPA"/>
</dbReference>
<dbReference type="GO" id="GO:0005886">
    <property type="term" value="C:plasma membrane"/>
    <property type="evidence" value="ECO:0000314"/>
    <property type="project" value="HPA"/>
</dbReference>
<dbReference type="GO" id="GO:0031616">
    <property type="term" value="C:spindle pole centrosome"/>
    <property type="evidence" value="ECO:0000315"/>
    <property type="project" value="UniProtKB"/>
</dbReference>
<dbReference type="GO" id="GO:0051015">
    <property type="term" value="F:actin filament binding"/>
    <property type="evidence" value="ECO:0000315"/>
    <property type="project" value="UniProtKB"/>
</dbReference>
<dbReference type="GO" id="GO:0051301">
    <property type="term" value="P:cell division"/>
    <property type="evidence" value="ECO:0007669"/>
    <property type="project" value="UniProtKB-KW"/>
</dbReference>
<dbReference type="GO" id="GO:0016477">
    <property type="term" value="P:cell migration"/>
    <property type="evidence" value="ECO:0000315"/>
    <property type="project" value="UniProtKB"/>
</dbReference>
<dbReference type="GO" id="GO:0051660">
    <property type="term" value="P:establishment of centrosome localization"/>
    <property type="evidence" value="ECO:0000315"/>
    <property type="project" value="UniProtKB"/>
</dbReference>
<dbReference type="GO" id="GO:0000132">
    <property type="term" value="P:establishment of mitotic spindle orientation"/>
    <property type="evidence" value="ECO:0000315"/>
    <property type="project" value="UniProtKB"/>
</dbReference>
<dbReference type="GO" id="GO:0090307">
    <property type="term" value="P:mitotic spindle assembly"/>
    <property type="evidence" value="ECO:0000315"/>
    <property type="project" value="UniProtKB"/>
</dbReference>
<dbReference type="GO" id="GO:0051640">
    <property type="term" value="P:organelle localization"/>
    <property type="evidence" value="ECO:0000315"/>
    <property type="project" value="UniProtKB"/>
</dbReference>
<dbReference type="GO" id="GO:1904776">
    <property type="term" value="P:regulation of protein localization to cell cortex"/>
    <property type="evidence" value="ECO:0000315"/>
    <property type="project" value="UniProtKB"/>
</dbReference>
<dbReference type="InterPro" id="IPR029304">
    <property type="entry name" value="AKAP2_C"/>
</dbReference>
<dbReference type="InterPro" id="IPR042779">
    <property type="entry name" value="MISP/MISP3-like"/>
</dbReference>
<dbReference type="PANTHER" id="PTHR18839:SF3">
    <property type="entry name" value="MITOTIC INTERACTOR AND SUBSTRATE OF PLK1"/>
    <property type="match status" value="1"/>
</dbReference>
<dbReference type="PANTHER" id="PTHR18839">
    <property type="entry name" value="MITOTIC INTERACTOR AND SUBSTRATE OF PLK1 MISP FAMILY MEMBER"/>
    <property type="match status" value="1"/>
</dbReference>
<dbReference type="Pfam" id="PF15304">
    <property type="entry name" value="AKAP2_C"/>
    <property type="match status" value="1"/>
</dbReference>
<feature type="chain" id="PRO_0000079381" description="Mitotic interactor and substrate of PLK1">
    <location>
        <begin position="1"/>
        <end position="679"/>
    </location>
</feature>
<feature type="region of interest" description="Disordered" evidence="2">
    <location>
        <begin position="151"/>
        <end position="182"/>
    </location>
</feature>
<feature type="region of interest" description="Disordered" evidence="2">
    <location>
        <begin position="206"/>
        <end position="245"/>
    </location>
</feature>
<feature type="region of interest" description="Disordered" evidence="2">
    <location>
        <begin position="360"/>
        <end position="419"/>
    </location>
</feature>
<feature type="region of interest" description="Disordered" evidence="2">
    <location>
        <begin position="447"/>
        <end position="494"/>
    </location>
</feature>
<feature type="region of interest" description="Disordered" evidence="2">
    <location>
        <begin position="557"/>
        <end position="598"/>
    </location>
</feature>
<feature type="region of interest" description="Disordered" evidence="2">
    <location>
        <begin position="622"/>
        <end position="643"/>
    </location>
</feature>
<feature type="coiled-coil region" evidence="1">
    <location>
        <begin position="545"/>
        <end position="569"/>
    </location>
</feature>
<feature type="compositionally biased region" description="Polar residues" evidence="2">
    <location>
        <begin position="153"/>
        <end position="163"/>
    </location>
</feature>
<feature type="compositionally biased region" description="Basic and acidic residues" evidence="2">
    <location>
        <begin position="360"/>
        <end position="371"/>
    </location>
</feature>
<feature type="compositionally biased region" description="Low complexity" evidence="2">
    <location>
        <begin position="401"/>
        <end position="411"/>
    </location>
</feature>
<feature type="compositionally biased region" description="Polar residues" evidence="2">
    <location>
        <begin position="472"/>
        <end position="482"/>
    </location>
</feature>
<feature type="compositionally biased region" description="Basic and acidic residues" evidence="2">
    <location>
        <begin position="557"/>
        <end position="567"/>
    </location>
</feature>
<feature type="compositionally biased region" description="Low complexity" evidence="2">
    <location>
        <begin position="583"/>
        <end position="593"/>
    </location>
</feature>
<feature type="modified residue" description="Phosphoserine; by CDK1; in vitro" evidence="3 11 12">
    <location>
        <position position="78"/>
    </location>
</feature>
<feature type="modified residue" description="Phosphoserine" evidence="12">
    <location>
        <position position="156"/>
    </location>
</feature>
<feature type="modified residue" description="Phosphothreonine; by CDK1; in vitro" evidence="3 8 9 11 12">
    <location>
        <position position="164"/>
    </location>
</feature>
<feature type="modified residue" description="Phosphothreonine; by CDK1; in vitro" evidence="3 9">
    <location>
        <position position="172"/>
    </location>
</feature>
<feature type="modified residue" description="Phosphothreonine" evidence="12">
    <location>
        <position position="179"/>
    </location>
</feature>
<feature type="modified residue" description="Phosphoserine; by CDK1; in vitro" evidence="3 11">
    <location>
        <position position="214"/>
    </location>
</feature>
<feature type="modified residue" description="Phosphothreonine" evidence="9 11">
    <location>
        <position position="219"/>
    </location>
</feature>
<feature type="modified residue" description="Phosphothreonine; by CDK1; in vitro" evidence="3 9 12">
    <location>
        <position position="224"/>
    </location>
</feature>
<feature type="modified residue" description="Phosphoserine; by CDK1; in vitro" evidence="3 9 10">
    <location>
        <position position="284"/>
    </location>
</feature>
<feature type="modified residue" description="Phosphothreonine; by CDK1; in vitro" evidence="3 9 10 11">
    <location>
        <position position="287"/>
    </location>
</feature>
<feature type="modified residue" description="Phosphoserine" evidence="12">
    <location>
        <position position="348"/>
    </location>
</feature>
<feature type="modified residue" description="Phosphothreonine; by CDK1; in vitro" evidence="3 11">
    <location>
        <position position="377"/>
    </location>
</feature>
<feature type="modified residue" description="Phosphoserine; by CDK1; in vitro" evidence="3">
    <location>
        <position position="382"/>
    </location>
</feature>
<feature type="modified residue" description="Phosphoserine; by PLK1; in vitro" evidence="3 9 11 12">
    <location>
        <position position="394"/>
    </location>
</feature>
<feature type="modified residue" description="Phosphoserine; by PLK1; in vitro" evidence="3 9 11 12">
    <location>
        <position position="395"/>
    </location>
</feature>
<feature type="modified residue" description="Phosphoserine; by PLK1; in vitro" evidence="3 9 12">
    <location>
        <position position="397"/>
    </location>
</feature>
<feature type="modified residue" description="Phosphoserine" evidence="9 10 11 12">
    <location>
        <position position="400"/>
    </location>
</feature>
<feature type="modified residue" description="Phosphoserine" evidence="9">
    <location>
        <position position="430"/>
    </location>
</feature>
<feature type="modified residue" description="Phosphoserine; by PLK1; in vitro" evidence="11 12">
    <location>
        <position position="471"/>
    </location>
</feature>
<feature type="modified residue" description="Phosphoserine" evidence="9 11 12">
    <location>
        <position position="541"/>
    </location>
</feature>
<feature type="modified residue" description="Phosphoserine" evidence="9 12">
    <location>
        <position position="543"/>
    </location>
</feature>
<feature type="modified residue" description="Phosphoserine; by CDK1; in vitro" evidence="3 9 11 12">
    <location>
        <position position="575"/>
    </location>
</feature>
<feature type="modified residue" description="Phosphothreonine" evidence="9 11">
    <location>
        <position position="577"/>
    </location>
</feature>
<feature type="modified residue" description="Phosphoserine; by PLK1; in vitro" evidence="3 9 11">
    <location>
        <position position="582"/>
    </location>
</feature>
<feature type="modified residue" description="Phosphoserine; by PLK1; in vitro" evidence="3">
    <location>
        <position position="586"/>
    </location>
</feature>
<feature type="modified residue" description="Phosphoserine" evidence="9">
    <location>
        <position position="675"/>
    </location>
</feature>
<feature type="sequence variant" id="VAR_061629" description="In dbSNP:rs45477999.">
    <original>A</original>
    <variation>T</variation>
    <location>
        <position position="99"/>
    </location>
</feature>
<feature type="sequence variant" id="VAR_033754" description="In dbSNP:rs3746173.">
    <original>S</original>
    <variation>G</variation>
    <location>
        <position position="156"/>
    </location>
</feature>
<feature type="sequence variant" id="VAR_033755" description="In dbSNP:rs3746175.">
    <original>K</original>
    <variation>R</variation>
    <location>
        <position position="232"/>
    </location>
</feature>
<feature type="sequence variant" id="VAR_050910" description="In dbSNP:rs35384259.">
    <original>S</original>
    <variation>N</variation>
    <location>
        <position position="269"/>
    </location>
</feature>
<feature type="sequence variant" id="VAR_033756" description="In dbSNP:rs8107847.">
    <original>E</original>
    <variation>G</variation>
    <location>
        <position position="653"/>
    </location>
</feature>
<feature type="mutagenesis site" description="Almost complete loss of CDK1 phosphorylation in vitro, loss of PLK1-binding, no effect on cortical localization; when associated with A-164; A-172; A-214; A-224; A-284; A-287; A-377 and A-575." evidence="3">
    <original>S</original>
    <variation>A</variation>
    <location>
        <position position="78"/>
    </location>
</feature>
<feature type="mutagenesis site" description="Almost complete loss of CDK1 phosphorylation in vitro, loss of PLK1-binding, no effect on cortical localization; when associated with A-78; A-172; A-214; A-224; A-284; A-287; A-377 and A-575." evidence="3">
    <original>T</original>
    <variation>A</variation>
    <location>
        <position position="164"/>
    </location>
</feature>
<feature type="mutagenesis site" description="Almost complete loss of CDK1 phosphorylation in vitro, loss of PLK1-binding, no effect on cortical localization; when associated with A-78; A-164; A-214; A-224; A-284; A-287; A-377 and A-575." evidence="3">
    <original>T</original>
    <variation>A</variation>
    <location>
        <position position="172"/>
    </location>
</feature>
<feature type="mutagenesis site" description="Almost complete loss of CDK1 phosphorylation in vitro, loss of PLK1-binding, no effect on cortical localization; when associated with A-78; A-164; A-172; A-224; A-284; A-287; A-377 and A-575." evidence="3">
    <original>S</original>
    <variation>A</variation>
    <location>
        <position position="214"/>
    </location>
</feature>
<feature type="mutagenesis site" description="Almost complete loss of CDK1 phosphorylation in vitro, loss of PLK1-binding, no effect on cortical localization; when associated with A-78; A-164; A-172; A-214; A-284; A-287; A-377 and A-575." evidence="3">
    <original>T</original>
    <variation>A</variation>
    <location>
        <position position="224"/>
    </location>
</feature>
<feature type="mutagenesis site" description="Almost complete loss of CDK1 phosphorylation in vitro, loss of PLK1-binding, no effect on cortical localization; when associated with A-78; A-164; A-172; A-214; A-224; A-287; A-377 and A-575." evidence="3">
    <original>S</original>
    <variation>A</variation>
    <location>
        <position position="284"/>
    </location>
</feature>
<feature type="mutagenesis site" description="Almost complete loss of CDK1 phosphorylation in vitro, loss of PLK1-binding, no effect on cortical localization; when associated with A-78; A-164; A-172; A-214; A-224; A-284; A-377 and A-575." evidence="3">
    <original>T</original>
    <variation>A</variation>
    <location>
        <position position="287"/>
    </location>
</feature>
<feature type="mutagenesis site" description="Almost complete loss of CDK1 phosphorylation in vitro, loss of PLK1-binding, no effect on cortical localization; when associated with A-78; A-164; A-172; A-214; A-224; A-284; A-287 and A-575." evidence="3">
    <original>T</original>
    <variation>A</variation>
    <location>
        <position position="377"/>
    </location>
</feature>
<feature type="mutagenesis site" description="Almost complete loss of CDK1 phosphorylation in vitro, loss of PLK1-binding, no effect on cortical localization; when associated with A-394; A-395; A-397; A-471; A-582 and A-586." evidence="3">
    <original>S</original>
    <variation>A</variation>
    <location>
        <position position="382"/>
    </location>
</feature>
<feature type="mutagenesis site" description="Drastic reduction in PLK1 phosphorylation in vitro, no effect on cortical localization; when associated with A-382; A-395; A-397; A-471; A-582 and A-586." evidence="3">
    <original>S</original>
    <variation>A</variation>
    <location>
        <position position="394"/>
    </location>
</feature>
<feature type="mutagenesis site" description="No effect on cortical localization; when associated with D-395; D-397; D-471; D-582 and D-586." evidence="3">
    <original>S</original>
    <variation>D</variation>
    <location>
        <position position="394"/>
    </location>
</feature>
<feature type="mutagenesis site" description="Drastic reduction in PLK1 phosphorylation in vitro, no effect on cortical localization; when associated with A-382; A-394; A-397; A-471; A-582 and A-586." evidence="3">
    <original>S</original>
    <variation>A</variation>
    <location>
        <position position="395"/>
    </location>
</feature>
<feature type="mutagenesis site" description="No effect on cortical localization; when associated with D-394; D-397; D-471; D-582 and D-586." evidence="3">
    <original>S</original>
    <variation>D</variation>
    <location>
        <position position="395"/>
    </location>
</feature>
<feature type="mutagenesis site" description="Drastic reduction in PLK1 phosphorylation in vitro, no effect on cortical localization; when associated with A-382; A-394; A-395; A-471; A-582 and A-586." evidence="3">
    <original>S</original>
    <variation>A</variation>
    <location>
        <position position="397"/>
    </location>
</feature>
<feature type="mutagenesis site" description="No effect on cortical localization; when associated with D-394; D-395; D-471; D-582 and D-586." evidence="3">
    <original>S</original>
    <variation>D</variation>
    <location>
        <position position="397"/>
    </location>
</feature>
<feature type="mutagenesis site" description="Drastic reduction in PLK1 phosphorylation in vitro, no effect on cortical localization; when associated with A-382; A-394; A-395; A-397; A-582 and A-586." evidence="3">
    <original>S</original>
    <variation>A</variation>
    <location>
        <position position="471"/>
    </location>
</feature>
<feature type="mutagenesis site" description="No effect on cortical localization; when associated with D-394; D-395; D-397; D-582 and D-586." evidence="3">
    <original>S</original>
    <variation>D</variation>
    <location>
        <position position="471"/>
    </location>
</feature>
<feature type="mutagenesis site" description="Almost complete loss of CDK1 phosphorylation in vitro, loss of PLK1-binding, no effect on cortical localization; when associated with A-78; A-164; A-172; A-214; A-224; A-284; A-287 and A-377." evidence="3">
    <original>S</original>
    <variation>A</variation>
    <location>
        <position position="575"/>
    </location>
</feature>
<feature type="mutagenesis site" description="Drastic reduction in PLK1 phosphorylation in vitro, no effect on cortical localization; when associated with A-382; A-394; A-395; A-397; A-471 and A-586." evidence="3">
    <original>S</original>
    <variation>A</variation>
    <location>
        <position position="582"/>
    </location>
</feature>
<feature type="mutagenesis site" description="No effect on cortical localization; when associated with D-394; D-395; D-397; D-471 and D-586." evidence="3">
    <original>S</original>
    <variation>D</variation>
    <location>
        <position position="582"/>
    </location>
</feature>
<feature type="mutagenesis site" description="Drastic reduction in PLK1 phosphorylation in vitro, no effect on cortical localization; when associated with A-382; A-394; A-395; A-397; A-471 and A-582." evidence="3">
    <original>S</original>
    <variation>A</variation>
    <location>
        <position position="586"/>
    </location>
</feature>
<feature type="mutagenesis site" description="No effect on cortical localization; when associated with D-394; D-395; D-397; D-471 and D-582." evidence="3">
    <original>S</original>
    <variation>D</variation>
    <location>
        <position position="586"/>
    </location>
</feature>
<gene>
    <name evidence="7" type="primary">MISP</name>
    <name evidence="7" type="synonym">C19orf21</name>
</gene>
<accession>Q8IVT2</accession>
<name>MISP_HUMAN</name>
<organism>
    <name type="scientific">Homo sapiens</name>
    <name type="common">Human</name>
    <dbReference type="NCBI Taxonomy" id="9606"/>
    <lineage>
        <taxon>Eukaryota</taxon>
        <taxon>Metazoa</taxon>
        <taxon>Chordata</taxon>
        <taxon>Craniata</taxon>
        <taxon>Vertebrata</taxon>
        <taxon>Euteleostomi</taxon>
        <taxon>Mammalia</taxon>
        <taxon>Eutheria</taxon>
        <taxon>Euarchontoglires</taxon>
        <taxon>Primates</taxon>
        <taxon>Haplorrhini</taxon>
        <taxon>Catarrhini</taxon>
        <taxon>Hominidae</taxon>
        <taxon>Homo</taxon>
    </lineage>
</organism>
<keyword id="KW-0009">Actin-binding</keyword>
<keyword id="KW-0131">Cell cycle</keyword>
<keyword id="KW-0132">Cell division</keyword>
<keyword id="KW-0965">Cell junction</keyword>
<keyword id="KW-0175">Coiled coil</keyword>
<keyword id="KW-0963">Cytoplasm</keyword>
<keyword id="KW-0206">Cytoskeleton</keyword>
<keyword id="KW-0498">Mitosis</keyword>
<keyword id="KW-0597">Phosphoprotein</keyword>
<keyword id="KW-1267">Proteomics identification</keyword>
<keyword id="KW-1185">Reference proteome</keyword>